<accession>B2UV75</accession>
<comment type="function">
    <text evidence="1">Binds 23S rRNA and is also seen to make contacts with the A and possibly P site tRNAs.</text>
</comment>
<comment type="subunit">
    <text evidence="1">Part of the 50S ribosomal subunit.</text>
</comment>
<comment type="similarity">
    <text evidence="1">Belongs to the universal ribosomal protein uL16 family.</text>
</comment>
<feature type="chain" id="PRO_1000142982" description="Large ribosomal subunit protein uL16">
    <location>
        <begin position="1"/>
        <end position="141"/>
    </location>
</feature>
<feature type="region of interest" description="Disordered" evidence="2">
    <location>
        <begin position="1"/>
        <end position="23"/>
    </location>
</feature>
<protein>
    <recommendedName>
        <fullName evidence="1">Large ribosomal subunit protein uL16</fullName>
    </recommendedName>
    <alternativeName>
        <fullName evidence="3">50S ribosomal protein L16</fullName>
    </alternativeName>
</protein>
<name>RL16_HELPS</name>
<sequence length="141" mass="16046">MLMPKRTKYRKQMKGRNRGKAHRGNSIAFGDIAIKAIEHGRIDSRQIESARVAMTRHIKRAGKVWIRVFPDKPLTAKPLETRMGKGKGSVEKWVMNIKPGRIVYEMLGIEEGLAREALALAQSKLPFKTKIVTCESENEIY</sequence>
<evidence type="ECO:0000255" key="1">
    <source>
        <dbReference type="HAMAP-Rule" id="MF_01342"/>
    </source>
</evidence>
<evidence type="ECO:0000256" key="2">
    <source>
        <dbReference type="SAM" id="MobiDB-lite"/>
    </source>
</evidence>
<evidence type="ECO:0000305" key="3"/>
<reference key="1">
    <citation type="submission" date="2008-05" db="EMBL/GenBank/DDBJ databases">
        <title>Genome sequence of Helicobacter pylori from the remote Amazon: traces of Asian ancestry of the first Americans.</title>
        <authorList>
            <person name="Kersulyte D."/>
            <person name="Kalia A."/>
            <person name="Gilman R.H."/>
            <person name="Berg D.E."/>
        </authorList>
    </citation>
    <scope>NUCLEOTIDE SEQUENCE [LARGE SCALE GENOMIC DNA]</scope>
    <source>
        <strain>Shi470</strain>
    </source>
</reference>
<keyword id="KW-0687">Ribonucleoprotein</keyword>
<keyword id="KW-0689">Ribosomal protein</keyword>
<keyword id="KW-0694">RNA-binding</keyword>
<keyword id="KW-0699">rRNA-binding</keyword>
<keyword id="KW-0820">tRNA-binding</keyword>
<gene>
    <name evidence="1" type="primary">rplP</name>
    <name type="ordered locus">HPSH_06785</name>
</gene>
<organism>
    <name type="scientific">Helicobacter pylori (strain Shi470)</name>
    <dbReference type="NCBI Taxonomy" id="512562"/>
    <lineage>
        <taxon>Bacteria</taxon>
        <taxon>Pseudomonadati</taxon>
        <taxon>Campylobacterota</taxon>
        <taxon>Epsilonproteobacteria</taxon>
        <taxon>Campylobacterales</taxon>
        <taxon>Helicobacteraceae</taxon>
        <taxon>Helicobacter</taxon>
    </lineage>
</organism>
<dbReference type="EMBL" id="CP001072">
    <property type="protein sequence ID" value="ACD48757.1"/>
    <property type="molecule type" value="Genomic_DNA"/>
</dbReference>
<dbReference type="RefSeq" id="WP_000928961.1">
    <property type="nucleotide sequence ID" value="NC_010698.2"/>
</dbReference>
<dbReference type="SMR" id="B2UV75"/>
<dbReference type="GeneID" id="93237557"/>
<dbReference type="KEGG" id="hps:HPSH_06785"/>
<dbReference type="HOGENOM" id="CLU_078858_2_1_7"/>
<dbReference type="GO" id="GO:0022625">
    <property type="term" value="C:cytosolic large ribosomal subunit"/>
    <property type="evidence" value="ECO:0007669"/>
    <property type="project" value="TreeGrafter"/>
</dbReference>
<dbReference type="GO" id="GO:0019843">
    <property type="term" value="F:rRNA binding"/>
    <property type="evidence" value="ECO:0007669"/>
    <property type="project" value="UniProtKB-UniRule"/>
</dbReference>
<dbReference type="GO" id="GO:0003735">
    <property type="term" value="F:structural constituent of ribosome"/>
    <property type="evidence" value="ECO:0007669"/>
    <property type="project" value="InterPro"/>
</dbReference>
<dbReference type="GO" id="GO:0000049">
    <property type="term" value="F:tRNA binding"/>
    <property type="evidence" value="ECO:0007669"/>
    <property type="project" value="UniProtKB-KW"/>
</dbReference>
<dbReference type="GO" id="GO:0006412">
    <property type="term" value="P:translation"/>
    <property type="evidence" value="ECO:0007669"/>
    <property type="project" value="UniProtKB-UniRule"/>
</dbReference>
<dbReference type="CDD" id="cd01433">
    <property type="entry name" value="Ribosomal_L16_L10e"/>
    <property type="match status" value="1"/>
</dbReference>
<dbReference type="FunFam" id="3.90.1170.10:FF:000001">
    <property type="entry name" value="50S ribosomal protein L16"/>
    <property type="match status" value="1"/>
</dbReference>
<dbReference type="Gene3D" id="3.90.1170.10">
    <property type="entry name" value="Ribosomal protein L10e/L16"/>
    <property type="match status" value="1"/>
</dbReference>
<dbReference type="HAMAP" id="MF_01342">
    <property type="entry name" value="Ribosomal_uL16"/>
    <property type="match status" value="1"/>
</dbReference>
<dbReference type="InterPro" id="IPR047873">
    <property type="entry name" value="Ribosomal_uL16"/>
</dbReference>
<dbReference type="InterPro" id="IPR000114">
    <property type="entry name" value="Ribosomal_uL16_bact-type"/>
</dbReference>
<dbReference type="InterPro" id="IPR020798">
    <property type="entry name" value="Ribosomal_uL16_CS"/>
</dbReference>
<dbReference type="InterPro" id="IPR016180">
    <property type="entry name" value="Ribosomal_uL16_dom"/>
</dbReference>
<dbReference type="InterPro" id="IPR036920">
    <property type="entry name" value="Ribosomal_uL16_sf"/>
</dbReference>
<dbReference type="NCBIfam" id="TIGR01164">
    <property type="entry name" value="rplP_bact"/>
    <property type="match status" value="1"/>
</dbReference>
<dbReference type="PANTHER" id="PTHR12220">
    <property type="entry name" value="50S/60S RIBOSOMAL PROTEIN L16"/>
    <property type="match status" value="1"/>
</dbReference>
<dbReference type="PANTHER" id="PTHR12220:SF13">
    <property type="entry name" value="LARGE RIBOSOMAL SUBUNIT PROTEIN UL16M"/>
    <property type="match status" value="1"/>
</dbReference>
<dbReference type="Pfam" id="PF00252">
    <property type="entry name" value="Ribosomal_L16"/>
    <property type="match status" value="1"/>
</dbReference>
<dbReference type="PRINTS" id="PR00060">
    <property type="entry name" value="RIBOSOMALL16"/>
</dbReference>
<dbReference type="SUPFAM" id="SSF54686">
    <property type="entry name" value="Ribosomal protein L16p/L10e"/>
    <property type="match status" value="1"/>
</dbReference>
<dbReference type="PROSITE" id="PS00586">
    <property type="entry name" value="RIBOSOMAL_L16_1"/>
    <property type="match status" value="1"/>
</dbReference>
<dbReference type="PROSITE" id="PS00701">
    <property type="entry name" value="RIBOSOMAL_L16_2"/>
    <property type="match status" value="1"/>
</dbReference>
<proteinExistence type="inferred from homology"/>